<evidence type="ECO:0000250" key="1"/>
<evidence type="ECO:0000255" key="2"/>
<evidence type="ECO:0000255" key="3">
    <source>
        <dbReference type="PROSITE-ProRule" id="PRU00998"/>
    </source>
</evidence>
<evidence type="ECO:0000256" key="4">
    <source>
        <dbReference type="SAM" id="MobiDB-lite"/>
    </source>
</evidence>
<evidence type="ECO:0000305" key="5"/>
<accession>A9YWH3</accession>
<accession>Q5EI00</accession>
<organism>
    <name type="scientific">Gekko japonicus</name>
    <name type="common">Schlegel's Japanese gecko</name>
    <dbReference type="NCBI Taxonomy" id="146911"/>
    <lineage>
        <taxon>Eukaryota</taxon>
        <taxon>Metazoa</taxon>
        <taxon>Chordata</taxon>
        <taxon>Craniata</taxon>
        <taxon>Vertebrata</taxon>
        <taxon>Euteleostomi</taxon>
        <taxon>Lepidosauria</taxon>
        <taxon>Squamata</taxon>
        <taxon>Bifurcata</taxon>
        <taxon>Gekkota</taxon>
        <taxon>Gekkonidae</taxon>
        <taxon>Gekkoninae</taxon>
        <taxon>Gekko</taxon>
    </lineage>
</organism>
<keyword id="KW-0175">Coiled coil</keyword>
<keyword id="KW-0963">Cytoplasm</keyword>
<keyword id="KW-0206">Cytoskeleton</keyword>
<keyword id="KW-0493">Microtubule</keyword>
<keyword id="KW-0597">Phosphoprotein</keyword>
<feature type="chain" id="PRO_0000372586" description="Stathmin">
    <location>
        <begin position="1"/>
        <end position="149"/>
    </location>
</feature>
<feature type="domain" description="SLD" evidence="3">
    <location>
        <begin position="4"/>
        <end position="145"/>
    </location>
</feature>
<feature type="region of interest" description="Disordered" evidence="4">
    <location>
        <begin position="121"/>
        <end position="149"/>
    </location>
</feature>
<feature type="coiled-coil region" evidence="2">
    <location>
        <begin position="41"/>
        <end position="141"/>
    </location>
</feature>
<feature type="compositionally biased region" description="Basic and acidic residues" evidence="4">
    <location>
        <begin position="121"/>
        <end position="143"/>
    </location>
</feature>
<feature type="modified residue" description="Phosphoserine" evidence="1">
    <location>
        <position position="16"/>
    </location>
</feature>
<feature type="modified residue" description="Phosphoserine" evidence="1">
    <location>
        <position position="25"/>
    </location>
</feature>
<feature type="modified residue" description="Phosphoserine" evidence="1">
    <location>
        <position position="28"/>
    </location>
</feature>
<feature type="modified residue" description="Phosphoserine" evidence="1">
    <location>
        <position position="38"/>
    </location>
</feature>
<feature type="modified residue" description="Phosphoserine" evidence="1">
    <location>
        <position position="46"/>
    </location>
</feature>
<feature type="modified residue" description="Phosphoserine" evidence="1">
    <location>
        <position position="63"/>
    </location>
</feature>
<feature type="modified residue" description="Phosphothreonine" evidence="1">
    <location>
        <position position="146"/>
    </location>
</feature>
<name>STMN1_GEKJA</name>
<gene>
    <name type="primary">STMN1</name>
    <name type="synonym">STMN</name>
</gene>
<protein>
    <recommendedName>
        <fullName>Stathmin</fullName>
    </recommendedName>
</protein>
<proteinExistence type="evidence at transcript level"/>
<sequence length="149" mass="17303">MASSDIQVKELEKRASGQAFELILSPRSKESVPEFPLSPPKKKDLSLEEIQKKLEAAEERRKSHEAEVLKQLAEKREHEKEVLQKAIEENNNFSKMAEEKLTHKMEANKENREAQMAAKLERLREKDKHIEEVRKNKESKDPADETEAD</sequence>
<comment type="function">
    <text evidence="1">Involved in the regulation of the microtubule (MT) filament system by destabilizing microtubules. Prevents assembly and promotes disassembly of microtubules (By similarity).</text>
</comment>
<comment type="subunit">
    <text evidence="1">Binds to two alpha/beta-tubulin heterodimers.</text>
</comment>
<comment type="subcellular location">
    <subcellularLocation>
        <location evidence="1">Cytoplasm</location>
        <location evidence="1">Cytoskeleton</location>
    </subcellularLocation>
</comment>
<comment type="similarity">
    <text evidence="5">Belongs to the stathmin family.</text>
</comment>
<comment type="sequence caution" evidence="5">
    <conflict type="miscellaneous discrepancy">
        <sequence resource="EMBL-CDS" id="AAW78997"/>
    </conflict>
    <text>Probable sequencing errors.</text>
</comment>
<dbReference type="EMBL" id="AY880382">
    <property type="protein sequence ID" value="AAW78997.1"/>
    <property type="status" value="ALT_SEQ"/>
    <property type="molecule type" value="mRNA"/>
</dbReference>
<dbReference type="EMBL" id="EU304453">
    <property type="protein sequence ID" value="ABY27080.1"/>
    <property type="molecule type" value="mRNA"/>
</dbReference>
<dbReference type="SMR" id="A9YWH3"/>
<dbReference type="Proteomes" id="UP000694871">
    <property type="component" value="Unplaced"/>
</dbReference>
<dbReference type="GO" id="GO:0005737">
    <property type="term" value="C:cytoplasm"/>
    <property type="evidence" value="ECO:0007669"/>
    <property type="project" value="UniProtKB-KW"/>
</dbReference>
<dbReference type="GO" id="GO:0005874">
    <property type="term" value="C:microtubule"/>
    <property type="evidence" value="ECO:0007669"/>
    <property type="project" value="UniProtKB-KW"/>
</dbReference>
<dbReference type="GO" id="GO:0043005">
    <property type="term" value="C:neuron projection"/>
    <property type="evidence" value="ECO:0007669"/>
    <property type="project" value="TreeGrafter"/>
</dbReference>
<dbReference type="GO" id="GO:0015631">
    <property type="term" value="F:tubulin binding"/>
    <property type="evidence" value="ECO:0007669"/>
    <property type="project" value="TreeGrafter"/>
</dbReference>
<dbReference type="GO" id="GO:0007019">
    <property type="term" value="P:microtubule depolymerization"/>
    <property type="evidence" value="ECO:0007669"/>
    <property type="project" value="TreeGrafter"/>
</dbReference>
<dbReference type="GO" id="GO:0031175">
    <property type="term" value="P:neuron projection development"/>
    <property type="evidence" value="ECO:0007669"/>
    <property type="project" value="TreeGrafter"/>
</dbReference>
<dbReference type="GO" id="GO:0031110">
    <property type="term" value="P:regulation of microtubule polymerization or depolymerization"/>
    <property type="evidence" value="ECO:0007669"/>
    <property type="project" value="InterPro"/>
</dbReference>
<dbReference type="Gene3D" id="6.10.280.30">
    <property type="match status" value="1"/>
</dbReference>
<dbReference type="InterPro" id="IPR030514">
    <property type="entry name" value="Stathmin_CS"/>
</dbReference>
<dbReference type="InterPro" id="IPR000956">
    <property type="entry name" value="Stathmin_fam"/>
</dbReference>
<dbReference type="InterPro" id="IPR036002">
    <property type="entry name" value="Stathmin_sf"/>
</dbReference>
<dbReference type="PANTHER" id="PTHR10104">
    <property type="entry name" value="STATHMIN"/>
    <property type="match status" value="1"/>
</dbReference>
<dbReference type="PANTHER" id="PTHR10104:SF5">
    <property type="entry name" value="STATHMIN"/>
    <property type="match status" value="1"/>
</dbReference>
<dbReference type="Pfam" id="PF00836">
    <property type="entry name" value="Stathmin"/>
    <property type="match status" value="1"/>
</dbReference>
<dbReference type="PIRSF" id="PIRSF002285">
    <property type="entry name" value="Stathmin"/>
    <property type="match status" value="1"/>
</dbReference>
<dbReference type="PRINTS" id="PR00345">
    <property type="entry name" value="STATHMIN"/>
</dbReference>
<dbReference type="SUPFAM" id="SSF101494">
    <property type="entry name" value="Stathmin"/>
    <property type="match status" value="1"/>
</dbReference>
<dbReference type="PROSITE" id="PS00563">
    <property type="entry name" value="STATHMIN_1"/>
    <property type="match status" value="1"/>
</dbReference>
<dbReference type="PROSITE" id="PS01041">
    <property type="entry name" value="STATHMIN_2"/>
    <property type="match status" value="1"/>
</dbReference>
<dbReference type="PROSITE" id="PS51663">
    <property type="entry name" value="STATHMIN_3"/>
    <property type="match status" value="1"/>
</dbReference>
<reference key="1">
    <citation type="submission" date="2005-01" db="EMBL/GenBank/DDBJ databases">
        <title>Analysis of expressed sequence tags and cloning of full length cDNA from brain and spinal cord cDNA library in Gecko.</title>
        <authorList>
            <person name="Gu X."/>
            <person name="Ding F."/>
            <person name="Liu Y."/>
            <person name="Liu M."/>
            <person name="Gong L."/>
            <person name="Shao C."/>
        </authorList>
    </citation>
    <scope>NUCLEOTIDE SEQUENCE [MRNA]</scope>
    <source>
        <tissue>Brain</tissue>
    </source>
</reference>
<reference key="2">
    <citation type="submission" date="2007-11" db="EMBL/GenBank/DDBJ databases">
        <authorList>
            <person name="Jiang X."/>
            <person name="Wang Y."/>
            <person name="Ding F."/>
            <person name="Liu Y."/>
            <person name="Huan Y."/>
            <person name="Ren L."/>
        </authorList>
    </citation>
    <scope>NUCLEOTIDE SEQUENCE [MRNA]</scope>
</reference>